<proteinExistence type="evidence at protein level"/>
<gene>
    <name evidence="4" type="primary">dbiP</name>
    <name type="ORF">K435DRAFT_870351</name>
</gene>
<dbReference type="EC" id="3.4.21.26" evidence="6"/>
<dbReference type="EMBL" id="ML179605">
    <property type="protein sequence ID" value="THU84329.1"/>
    <property type="status" value="ALT_SEQ"/>
    <property type="molecule type" value="Genomic_DNA"/>
</dbReference>
<dbReference type="SMR" id="A0A4S8L6U5"/>
<dbReference type="OrthoDB" id="248387at2759"/>
<dbReference type="Proteomes" id="UP000297245">
    <property type="component" value="Unassembled WGS sequence"/>
</dbReference>
<dbReference type="GO" id="GO:0005829">
    <property type="term" value="C:cytosol"/>
    <property type="evidence" value="ECO:0007669"/>
    <property type="project" value="TreeGrafter"/>
</dbReference>
<dbReference type="GO" id="GO:0070012">
    <property type="term" value="F:oligopeptidase activity"/>
    <property type="evidence" value="ECO:0007669"/>
    <property type="project" value="TreeGrafter"/>
</dbReference>
<dbReference type="GO" id="GO:0004252">
    <property type="term" value="F:serine-type endopeptidase activity"/>
    <property type="evidence" value="ECO:0007669"/>
    <property type="project" value="UniProtKB-EC"/>
</dbReference>
<dbReference type="GO" id="GO:0006508">
    <property type="term" value="P:proteolysis"/>
    <property type="evidence" value="ECO:0007669"/>
    <property type="project" value="UniProtKB-KW"/>
</dbReference>
<dbReference type="FunFam" id="3.40.50.1820:FF:000005">
    <property type="entry name" value="Prolyl endopeptidase"/>
    <property type="match status" value="1"/>
</dbReference>
<dbReference type="Gene3D" id="3.40.50.1820">
    <property type="entry name" value="alpha/beta hydrolase"/>
    <property type="match status" value="1"/>
</dbReference>
<dbReference type="Gene3D" id="2.130.10.120">
    <property type="entry name" value="Prolyl oligopeptidase, N-terminal domain"/>
    <property type="match status" value="1"/>
</dbReference>
<dbReference type="InterPro" id="IPR029058">
    <property type="entry name" value="AB_hydrolase_fold"/>
</dbReference>
<dbReference type="InterPro" id="IPR002471">
    <property type="entry name" value="Pept_S9_AS"/>
</dbReference>
<dbReference type="InterPro" id="IPR023302">
    <property type="entry name" value="Pept_S9A_N"/>
</dbReference>
<dbReference type="InterPro" id="IPR001375">
    <property type="entry name" value="Peptidase_S9_cat"/>
</dbReference>
<dbReference type="InterPro" id="IPR002470">
    <property type="entry name" value="Peptidase_S9A"/>
</dbReference>
<dbReference type="InterPro" id="IPR051167">
    <property type="entry name" value="Prolyl_oligopep/macrocyclase"/>
</dbReference>
<dbReference type="PANTHER" id="PTHR42881">
    <property type="entry name" value="PROLYL ENDOPEPTIDASE"/>
    <property type="match status" value="1"/>
</dbReference>
<dbReference type="PANTHER" id="PTHR42881:SF2">
    <property type="entry name" value="PROLYL ENDOPEPTIDASE"/>
    <property type="match status" value="1"/>
</dbReference>
<dbReference type="Pfam" id="PF00326">
    <property type="entry name" value="Peptidase_S9"/>
    <property type="match status" value="1"/>
</dbReference>
<dbReference type="Pfam" id="PF02897">
    <property type="entry name" value="Peptidase_S9_N"/>
    <property type="match status" value="1"/>
</dbReference>
<dbReference type="PRINTS" id="PR00862">
    <property type="entry name" value="PROLIGOPTASE"/>
</dbReference>
<dbReference type="SUPFAM" id="SSF53474">
    <property type="entry name" value="alpha/beta-Hydrolases"/>
    <property type="match status" value="1"/>
</dbReference>
<dbReference type="SUPFAM" id="SSF50993">
    <property type="entry name" value="Peptidase/esterase 'gauge' domain"/>
    <property type="match status" value="1"/>
</dbReference>
<dbReference type="PROSITE" id="PS00708">
    <property type="entry name" value="PRO_ENDOPEP_SER"/>
    <property type="match status" value="1"/>
</dbReference>
<evidence type="ECO:0000250" key="1">
    <source>
        <dbReference type="UniProtKB" id="P48147"/>
    </source>
</evidence>
<evidence type="ECO:0000255" key="2">
    <source>
        <dbReference type="PROSITE-ProRule" id="PRU10084"/>
    </source>
</evidence>
<evidence type="ECO:0000269" key="3">
    <source>
    </source>
</evidence>
<evidence type="ECO:0000303" key="4">
    <source>
    </source>
</evidence>
<evidence type="ECO:0000305" key="5"/>
<evidence type="ECO:0000305" key="6">
    <source>
    </source>
</evidence>
<name>DBIP_DENBC</name>
<reference key="1">
    <citation type="journal article" date="2019" name="Nat. Ecol. Evol.">
        <title>Megaphylogeny resolves global patterns of mushroom evolution.</title>
        <authorList>
            <person name="Varga T."/>
            <person name="Krizsan K."/>
            <person name="Foeldi C."/>
            <person name="Dima B."/>
            <person name="Sanchez-Garcia M."/>
            <person name="Sanchez-Ramirez S."/>
            <person name="Szoellosi G.J."/>
            <person name="Szarkandi J.G."/>
            <person name="Papp V."/>
            <person name="Albert L."/>
            <person name="Andreopoulos W."/>
            <person name="Angelini C."/>
            <person name="Antonin V."/>
            <person name="Barry K.W."/>
            <person name="Bougher N.L."/>
            <person name="Buchanan P."/>
            <person name="Buyck B."/>
            <person name="Bense V."/>
            <person name="Catcheside P."/>
            <person name="Chovatia M."/>
            <person name="Cooper J."/>
            <person name="Daemon W."/>
            <person name="Desjardin D."/>
            <person name="Finy P."/>
            <person name="Geml J."/>
            <person name="Haridas S."/>
            <person name="Hughes K."/>
            <person name="Justo A."/>
            <person name="Karasinski D."/>
            <person name="Kautmanova I."/>
            <person name="Kiss B."/>
            <person name="Kocsube S."/>
            <person name="Kotiranta H."/>
            <person name="LaButti K.M."/>
            <person name="Lechner B.E."/>
            <person name="Liimatainen K."/>
            <person name="Lipzen A."/>
            <person name="Lukacs Z."/>
            <person name="Mihaltcheva S."/>
            <person name="Morgado L.N."/>
            <person name="Niskanen T."/>
            <person name="Noordeloos M.E."/>
            <person name="Ohm R.A."/>
            <person name="Ortiz-Santana B."/>
            <person name="Ovrebo C."/>
            <person name="Racz N."/>
            <person name="Riley R."/>
            <person name="Savchenko A."/>
            <person name="Shiryaev A."/>
            <person name="Soop K."/>
            <person name="Spirin V."/>
            <person name="Szebenyi C."/>
            <person name="Tomsovsky M."/>
            <person name="Tulloss R.E."/>
            <person name="Uehling J."/>
            <person name="Grigoriev I.V."/>
            <person name="Vagvoelgyi C."/>
            <person name="Papp T."/>
            <person name="Martin F.M."/>
            <person name="Miettinen O."/>
            <person name="Hibbett D.S."/>
            <person name="Nagy L.G."/>
        </authorList>
    </citation>
    <scope>NUCLEOTIDE SEQUENCE [LARGE SCALE GENOMIC DNA]</scope>
    <source>
        <strain>CBS 962.96</strain>
    </source>
</reference>
<reference key="2">
    <citation type="journal article" date="2021" name="Sci. Rep.">
        <title>Identification, heterologous production and bioactivity of lentinulin A and dendrothelin A, two natural variants of backbone N-methylated peptide macrocycle omphalotin A.</title>
        <authorList>
            <person name="Matabaro E."/>
            <person name="Kaspar H."/>
            <person name="Dahlin P."/>
            <person name="Bader D.L.V."/>
            <person name="Murar C.E."/>
            <person name="Staubli F."/>
            <person name="Field C.M."/>
            <person name="Bode J.W."/>
            <person name="Kuenzler M."/>
        </authorList>
    </citation>
    <scope>FUNCTION</scope>
</reference>
<reference key="3">
    <citation type="journal article" date="2022" name="Sci. Rep.">
        <title>Author Correction: Identification, heterologous production and bioactivity of lentinulin A and dendrothelin A, two natural variants of backbone N-methylated peptide macrocycle omphalotin A.</title>
        <authorList>
            <person name="Matabaro E."/>
            <person name="Kaspar H."/>
            <person name="Dahlin P."/>
            <person name="Bader D.L.V."/>
            <person name="Murar C.E."/>
            <person name="Staubli F."/>
            <person name="Field C.M."/>
            <person name="Bode J.W."/>
            <person name="Kuenzler M."/>
        </authorList>
    </citation>
    <scope>ERRATUM OF PUBMED:33574430</scope>
</reference>
<feature type="chain" id="PRO_0000458537" description="Prolyl oligopeptidase dbiP">
    <location>
        <begin position="1"/>
        <end position="736"/>
    </location>
</feature>
<feature type="active site" description="Charge relay system" evidence="2">
    <location>
        <position position="572"/>
    </location>
</feature>
<feature type="active site" description="Charge relay system" evidence="2">
    <location>
        <position position="656"/>
    </location>
</feature>
<feature type="active site" description="Charge relay system" evidence="2">
    <location>
        <position position="692"/>
    </location>
</feature>
<keyword id="KW-0378">Hydrolase</keyword>
<keyword id="KW-0645">Protease</keyword>
<keyword id="KW-1185">Reference proteome</keyword>
<keyword id="KW-0720">Serine protease</keyword>
<keyword id="KW-0843">Virulence</keyword>
<sequence length="736" mass="83691">MPVPGWGSYPPFDRDETSAITYQSKLRGSVTVYDPYSALEVPSNDSEETKAFILEQNKFSRAYLDANPDRQTWLETLKKSWHYRRFTTPTRESDDHFYFLYNDGLLAQSPVYRVKVDDVDSILTESGPGGELFFDPNLLSLDGVATLTGTAMSPCGKYWAYAISEHGNDWMTIYVRKTSSPHHPSQERGKDPGRMDDVIQHCRIFFVSWTDDSKGFFYSKWPPDENQGNGNAPGVDCKIYYHRIAVFLSEDPEHPGWFWNVEVSPSGQYALLLGTRDASLNQLVKLADLHTSDIETGIQWTTLHDSWQARFSIIGNDNSLIYFRTNLEAENHRVAAFNVHHPQAGFTTLVPGSLDSVLLDAKLYGINKLVLVYQHLAKHEIYLHDIETGRRLRQIFTDLAGKMTISGRRADHEMFVLYSDFISPGTLYRQLLNRYKFDKDTDKGLLFRTIKVDALNLDDFVTESEFYPSKDGTLVHMFITHPKDVFTDGTAPVLMYGYGGFGAPMFPNFSISNLLFCNIYRGIGGSEFGESWHREGMLEKKQNVFDDFRAAAEWLVTNKYARKGGVAIRGGSNGGIMTTACSNQAPELYGCVITIAGLQDMLRYTKFTFGDLLRSEYGNPENPEDFDYIYKYSPYHNIPLKEVTMPPMLFLQSDYDDRVSPLHTYKHVAALQHRFPKGPNPIILRIDLDSGHYAGKSTMRLIEETADEYSFIGKSLGLTMHLPNNSNYSNRWCVLG</sequence>
<comment type="function">
    <text evidence="3">Prolyl oligopeptidase; part of the gene cluster that mediates the biosynthesis of dendrothelin A, a highly methylated cyclic dodecapeptide showing slight nematodicidal activity (PubMed:33574430). Excises and catalyzes the macrocyclization of the methylated core peptide of dbiMA to yield dendrothelin A (PubMed:33574430). DbiP works in a two-step fashion with an initial cleavage at the N-terminus, followed by a second cleavage at the C-terminus of the core peptide (PubMed:33574430). According to this mechanism, the free N-terminus of the core peptide, generated by the first cleavage, attacks the covalent intermediate of the second cleavage, which results in macrocyclization of the core peptide (PubMed:33574430).</text>
</comment>
<comment type="catalytic activity">
    <reaction evidence="6">
        <text>Hydrolysis of Pro-|-Xaa &gt;&gt; Ala-|-Xaa in oligopeptides.</text>
        <dbReference type="EC" id="3.4.21.26"/>
    </reaction>
</comment>
<comment type="pathway">
    <text evidence="6">Mycotoxin biosynthesis.</text>
</comment>
<comment type="subunit">
    <text evidence="1">Monomer.</text>
</comment>
<comment type="biotechnology">
    <text evidence="3">Dendrothelin A displays slight activity against the plant-pathogenic nematode Meloidogyne incognita.</text>
</comment>
<comment type="similarity">
    <text evidence="5">Belongs to the peptidase S9A family.</text>
</comment>
<comment type="sequence caution" evidence="5">
    <conflict type="erroneous gene model prediction">
        <sequence resource="EMBL-CDS" id="THU84329"/>
    </conflict>
</comment>
<accession>A0A4S8L6U5</accession>
<protein>
    <recommendedName>
        <fullName evidence="4">Prolyl oligopeptidase dbiP</fullName>
        <ecNumber evidence="6">3.4.21.26</ecNumber>
    </recommendedName>
    <alternativeName>
        <fullName evidence="4">Dendrothelin A biosynthesis cluster protein P</fullName>
    </alternativeName>
</protein>
<organism>
    <name type="scientific">Dendrothele bispora (strain CBS 962.96)</name>
    <dbReference type="NCBI Taxonomy" id="1314807"/>
    <lineage>
        <taxon>Eukaryota</taxon>
        <taxon>Fungi</taxon>
        <taxon>Dikarya</taxon>
        <taxon>Basidiomycota</taxon>
        <taxon>Agaricomycotina</taxon>
        <taxon>Agaricomycetes</taxon>
        <taxon>Agaricomycetidae</taxon>
        <taxon>Agaricales</taxon>
        <taxon>Agaricales incertae sedis</taxon>
        <taxon>Dendrothele</taxon>
    </lineage>
</organism>